<evidence type="ECO:0000255" key="1">
    <source>
        <dbReference type="HAMAP-Rule" id="MF_00052"/>
    </source>
</evidence>
<evidence type="ECO:0000255" key="2">
    <source>
        <dbReference type="PROSITE-ProRule" id="PRU01319"/>
    </source>
</evidence>
<reference key="1">
    <citation type="journal article" date="2008" name="PLoS Genet.">
        <title>Complete genome sequence of the N2-fixing broad host range endophyte Klebsiella pneumoniae 342 and virulence predictions verified in mice.</title>
        <authorList>
            <person name="Fouts D.E."/>
            <person name="Tyler H.L."/>
            <person name="DeBoy R.T."/>
            <person name="Daugherty S."/>
            <person name="Ren Q."/>
            <person name="Badger J.H."/>
            <person name="Durkin A.S."/>
            <person name="Huot H."/>
            <person name="Shrivastava S."/>
            <person name="Kothari S."/>
            <person name="Dodson R.J."/>
            <person name="Mohamoud Y."/>
            <person name="Khouri H."/>
            <person name="Roesch L.F.W."/>
            <person name="Krogfelt K.A."/>
            <person name="Struve C."/>
            <person name="Triplett E.W."/>
            <person name="Methe B.A."/>
        </authorList>
    </citation>
    <scope>NUCLEOTIDE SEQUENCE [LARGE SCALE GENOMIC DNA]</scope>
    <source>
        <strain>342</strain>
    </source>
</reference>
<protein>
    <recommendedName>
        <fullName evidence="1">Ribonuclease HII</fullName>
        <shortName evidence="1">RNase HII</shortName>
        <ecNumber evidence="1">3.1.26.4</ecNumber>
    </recommendedName>
</protein>
<proteinExistence type="inferred from homology"/>
<sequence>MMEFVYPHTHLVAGVDEVGRGPLVGAVVTAAVILDPAKPIVGLNDSKKLSEKRRLALCDEIKEKALCWSLGRAEPHEIDELNILHATMLAMQRAVAGLSIVPEFVLIDGNRCPSLPMPSLAVVKGDSRVAEISAASILAKVTRDAEMATLDLAFPHYGFAQHKGYPTAVHLQKLQEHGATEHHRRSFGPVKRALGLASN</sequence>
<accession>B5Y1I8</accession>
<keyword id="KW-0963">Cytoplasm</keyword>
<keyword id="KW-0255">Endonuclease</keyword>
<keyword id="KW-0378">Hydrolase</keyword>
<keyword id="KW-0464">Manganese</keyword>
<keyword id="KW-0479">Metal-binding</keyword>
<keyword id="KW-0540">Nuclease</keyword>
<name>RNH2_KLEP3</name>
<gene>
    <name evidence="1" type="primary">rnhB</name>
    <name type="ordered locus">KPK_4537</name>
</gene>
<dbReference type="EC" id="3.1.26.4" evidence="1"/>
<dbReference type="EMBL" id="CP000964">
    <property type="protein sequence ID" value="ACI10343.1"/>
    <property type="molecule type" value="Genomic_DNA"/>
</dbReference>
<dbReference type="SMR" id="B5Y1I8"/>
<dbReference type="KEGG" id="kpe:KPK_4537"/>
<dbReference type="HOGENOM" id="CLU_036532_3_2_6"/>
<dbReference type="Proteomes" id="UP000001734">
    <property type="component" value="Chromosome"/>
</dbReference>
<dbReference type="GO" id="GO:0005737">
    <property type="term" value="C:cytoplasm"/>
    <property type="evidence" value="ECO:0007669"/>
    <property type="project" value="UniProtKB-SubCell"/>
</dbReference>
<dbReference type="GO" id="GO:0032299">
    <property type="term" value="C:ribonuclease H2 complex"/>
    <property type="evidence" value="ECO:0007669"/>
    <property type="project" value="TreeGrafter"/>
</dbReference>
<dbReference type="GO" id="GO:0030145">
    <property type="term" value="F:manganese ion binding"/>
    <property type="evidence" value="ECO:0007669"/>
    <property type="project" value="UniProtKB-UniRule"/>
</dbReference>
<dbReference type="GO" id="GO:0003723">
    <property type="term" value="F:RNA binding"/>
    <property type="evidence" value="ECO:0007669"/>
    <property type="project" value="InterPro"/>
</dbReference>
<dbReference type="GO" id="GO:0004523">
    <property type="term" value="F:RNA-DNA hybrid ribonuclease activity"/>
    <property type="evidence" value="ECO:0007669"/>
    <property type="project" value="UniProtKB-UniRule"/>
</dbReference>
<dbReference type="GO" id="GO:0043137">
    <property type="term" value="P:DNA replication, removal of RNA primer"/>
    <property type="evidence" value="ECO:0007669"/>
    <property type="project" value="TreeGrafter"/>
</dbReference>
<dbReference type="GO" id="GO:0006298">
    <property type="term" value="P:mismatch repair"/>
    <property type="evidence" value="ECO:0007669"/>
    <property type="project" value="TreeGrafter"/>
</dbReference>
<dbReference type="CDD" id="cd07182">
    <property type="entry name" value="RNase_HII_bacteria_HII_like"/>
    <property type="match status" value="1"/>
</dbReference>
<dbReference type="FunFam" id="3.30.420.10:FF:000006">
    <property type="entry name" value="Ribonuclease HII"/>
    <property type="match status" value="1"/>
</dbReference>
<dbReference type="Gene3D" id="3.30.420.10">
    <property type="entry name" value="Ribonuclease H-like superfamily/Ribonuclease H"/>
    <property type="match status" value="1"/>
</dbReference>
<dbReference type="HAMAP" id="MF_00052_B">
    <property type="entry name" value="RNase_HII_B"/>
    <property type="match status" value="1"/>
</dbReference>
<dbReference type="InterPro" id="IPR022898">
    <property type="entry name" value="RNase_HII"/>
</dbReference>
<dbReference type="InterPro" id="IPR001352">
    <property type="entry name" value="RNase_HII/HIII"/>
</dbReference>
<dbReference type="InterPro" id="IPR024567">
    <property type="entry name" value="RNase_HII/HIII_dom"/>
</dbReference>
<dbReference type="InterPro" id="IPR012337">
    <property type="entry name" value="RNaseH-like_sf"/>
</dbReference>
<dbReference type="InterPro" id="IPR036397">
    <property type="entry name" value="RNaseH_sf"/>
</dbReference>
<dbReference type="NCBIfam" id="NF000594">
    <property type="entry name" value="PRK00015.1-1"/>
    <property type="match status" value="1"/>
</dbReference>
<dbReference type="NCBIfam" id="NF000595">
    <property type="entry name" value="PRK00015.1-3"/>
    <property type="match status" value="1"/>
</dbReference>
<dbReference type="NCBIfam" id="NF000596">
    <property type="entry name" value="PRK00015.1-4"/>
    <property type="match status" value="1"/>
</dbReference>
<dbReference type="PANTHER" id="PTHR10954">
    <property type="entry name" value="RIBONUCLEASE H2 SUBUNIT A"/>
    <property type="match status" value="1"/>
</dbReference>
<dbReference type="PANTHER" id="PTHR10954:SF18">
    <property type="entry name" value="RIBONUCLEASE HII"/>
    <property type="match status" value="1"/>
</dbReference>
<dbReference type="Pfam" id="PF01351">
    <property type="entry name" value="RNase_HII"/>
    <property type="match status" value="1"/>
</dbReference>
<dbReference type="SUPFAM" id="SSF53098">
    <property type="entry name" value="Ribonuclease H-like"/>
    <property type="match status" value="1"/>
</dbReference>
<dbReference type="PROSITE" id="PS51975">
    <property type="entry name" value="RNASE_H_2"/>
    <property type="match status" value="1"/>
</dbReference>
<feature type="chain" id="PRO_1000091630" description="Ribonuclease HII">
    <location>
        <begin position="1"/>
        <end position="199"/>
    </location>
</feature>
<feature type="domain" description="RNase H type-2" evidence="2">
    <location>
        <begin position="10"/>
        <end position="199"/>
    </location>
</feature>
<feature type="binding site" evidence="1">
    <location>
        <position position="16"/>
    </location>
    <ligand>
        <name>a divalent metal cation</name>
        <dbReference type="ChEBI" id="CHEBI:60240"/>
    </ligand>
</feature>
<feature type="binding site" evidence="1">
    <location>
        <position position="17"/>
    </location>
    <ligand>
        <name>a divalent metal cation</name>
        <dbReference type="ChEBI" id="CHEBI:60240"/>
    </ligand>
</feature>
<feature type="binding site" evidence="1">
    <location>
        <position position="108"/>
    </location>
    <ligand>
        <name>a divalent metal cation</name>
        <dbReference type="ChEBI" id="CHEBI:60240"/>
    </ligand>
</feature>
<organism>
    <name type="scientific">Klebsiella pneumoniae (strain 342)</name>
    <dbReference type="NCBI Taxonomy" id="507522"/>
    <lineage>
        <taxon>Bacteria</taxon>
        <taxon>Pseudomonadati</taxon>
        <taxon>Pseudomonadota</taxon>
        <taxon>Gammaproteobacteria</taxon>
        <taxon>Enterobacterales</taxon>
        <taxon>Enterobacteriaceae</taxon>
        <taxon>Klebsiella/Raoultella group</taxon>
        <taxon>Klebsiella</taxon>
        <taxon>Klebsiella pneumoniae complex</taxon>
    </lineage>
</organism>
<comment type="function">
    <text evidence="1">Endonuclease that specifically degrades the RNA of RNA-DNA hybrids.</text>
</comment>
<comment type="catalytic activity">
    <reaction evidence="1">
        <text>Endonucleolytic cleavage to 5'-phosphomonoester.</text>
        <dbReference type="EC" id="3.1.26.4"/>
    </reaction>
</comment>
<comment type="cofactor">
    <cofactor evidence="1">
        <name>Mn(2+)</name>
        <dbReference type="ChEBI" id="CHEBI:29035"/>
    </cofactor>
    <cofactor evidence="1">
        <name>Mg(2+)</name>
        <dbReference type="ChEBI" id="CHEBI:18420"/>
    </cofactor>
    <text evidence="1">Manganese or magnesium. Binds 1 divalent metal ion per monomer in the absence of substrate. May bind a second metal ion after substrate binding.</text>
</comment>
<comment type="subcellular location">
    <subcellularLocation>
        <location evidence="1">Cytoplasm</location>
    </subcellularLocation>
</comment>
<comment type="similarity">
    <text evidence="1">Belongs to the RNase HII family.</text>
</comment>